<feature type="chain" id="PRO_1000143419" description="ATP synthase subunit alpha">
    <location>
        <begin position="1"/>
        <end position="510"/>
    </location>
</feature>
<feature type="binding site" evidence="1">
    <location>
        <begin position="171"/>
        <end position="178"/>
    </location>
    <ligand>
        <name>ATP</name>
        <dbReference type="ChEBI" id="CHEBI:30616"/>
    </ligand>
</feature>
<feature type="site" description="Required for activity" evidence="1">
    <location>
        <position position="372"/>
    </location>
</feature>
<evidence type="ECO:0000255" key="1">
    <source>
        <dbReference type="HAMAP-Rule" id="MF_01346"/>
    </source>
</evidence>
<protein>
    <recommendedName>
        <fullName evidence="1">ATP synthase subunit alpha</fullName>
        <ecNumber evidence="1">7.1.2.2</ecNumber>
    </recommendedName>
    <alternativeName>
        <fullName evidence="1">ATP synthase F1 sector subunit alpha</fullName>
    </alternativeName>
    <alternativeName>
        <fullName evidence="1">F-ATPase subunit alpha</fullName>
    </alternativeName>
</protein>
<name>ATPA_PHEZH</name>
<gene>
    <name evidence="1" type="primary">atpA</name>
    <name type="ordered locus">PHZ_c0235</name>
</gene>
<comment type="function">
    <text evidence="1">Produces ATP from ADP in the presence of a proton gradient across the membrane. The alpha chain is a regulatory subunit.</text>
</comment>
<comment type="catalytic activity">
    <reaction evidence="1">
        <text>ATP + H2O + 4 H(+)(in) = ADP + phosphate + 5 H(+)(out)</text>
        <dbReference type="Rhea" id="RHEA:57720"/>
        <dbReference type="ChEBI" id="CHEBI:15377"/>
        <dbReference type="ChEBI" id="CHEBI:15378"/>
        <dbReference type="ChEBI" id="CHEBI:30616"/>
        <dbReference type="ChEBI" id="CHEBI:43474"/>
        <dbReference type="ChEBI" id="CHEBI:456216"/>
        <dbReference type="EC" id="7.1.2.2"/>
    </reaction>
</comment>
<comment type="subunit">
    <text evidence="1">F-type ATPases have 2 components, CF(1) - the catalytic core - and CF(0) - the membrane proton channel. CF(1) has five subunits: alpha(3), beta(3), gamma(1), delta(1), epsilon(1). CF(0) has three main subunits: a(1), b(2) and c(9-12). The alpha and beta chains form an alternating ring which encloses part of the gamma chain. CF(1) is attached to CF(0) by a central stalk formed by the gamma and epsilon chains, while a peripheral stalk is formed by the delta and b chains.</text>
</comment>
<comment type="subcellular location">
    <subcellularLocation>
        <location evidence="1">Cell inner membrane</location>
        <topology evidence="1">Peripheral membrane protein</topology>
    </subcellularLocation>
</comment>
<comment type="similarity">
    <text evidence="1">Belongs to the ATPase alpha/beta chains family.</text>
</comment>
<proteinExistence type="inferred from homology"/>
<accession>B4RD45</accession>
<keyword id="KW-0066">ATP synthesis</keyword>
<keyword id="KW-0067">ATP-binding</keyword>
<keyword id="KW-0997">Cell inner membrane</keyword>
<keyword id="KW-1003">Cell membrane</keyword>
<keyword id="KW-0139">CF(1)</keyword>
<keyword id="KW-0375">Hydrogen ion transport</keyword>
<keyword id="KW-0406">Ion transport</keyword>
<keyword id="KW-0472">Membrane</keyword>
<keyword id="KW-0547">Nucleotide-binding</keyword>
<keyword id="KW-1185">Reference proteome</keyword>
<keyword id="KW-1278">Translocase</keyword>
<keyword id="KW-0813">Transport</keyword>
<sequence>MDIRAAEISAILKSQIANFGEEADVSDVGSVLSVGDGIARVYGLDNVQAGEMVEFPSAGVKGMALNLERDNVGIVIFGEDRAIREGDEVRRLGEIVDVPVGKGLLGRVVNPLGEPIDGKGPIQNVAERRRVDVKAPGIIPRKSVHEPVQTGLKAIDTLIPVGRGQRELIIGDRQTGKTAVAVDTILNQKQVNAGGDESQKLYCIYVAIGQKRSTVAQIVKTLEERGALDYTIVVSATASEPAPLQFLAPFAGCAMGEWFRDNGMHAVIIYDDLSKQAVAYRQMSLLLRRPPGREAYPGDVFYLHSRLLERAAKLNEDNGLGSLTALPIIETQANDVSAYIPTNVISITDGQIFLETDLFFQGIRPAVNVGISVSRVGSSAQIKAMKTAAGPIKGELAQYREMAAFAKFGSDLDVATQRQLARGERLTELLKQPQYSPLAVEEQVVSVYAGTRGYLDKIPTAQVGRFESELLSYMHAKHQDILDEIRTKKDLGPVEDRLKSALAAFADSFA</sequence>
<dbReference type="EC" id="7.1.2.2" evidence="1"/>
<dbReference type="EMBL" id="CP000747">
    <property type="protein sequence ID" value="ACG76649.1"/>
    <property type="molecule type" value="Genomic_DNA"/>
</dbReference>
<dbReference type="RefSeq" id="WP_012520797.1">
    <property type="nucleotide sequence ID" value="NC_011144.1"/>
</dbReference>
<dbReference type="SMR" id="B4RD45"/>
<dbReference type="STRING" id="450851.PHZ_c0235"/>
<dbReference type="KEGG" id="pzu:PHZ_c0235"/>
<dbReference type="eggNOG" id="COG0056">
    <property type="taxonomic scope" value="Bacteria"/>
</dbReference>
<dbReference type="HOGENOM" id="CLU_010091_2_1_5"/>
<dbReference type="OrthoDB" id="9803053at2"/>
<dbReference type="Proteomes" id="UP000001868">
    <property type="component" value="Chromosome"/>
</dbReference>
<dbReference type="GO" id="GO:0005886">
    <property type="term" value="C:plasma membrane"/>
    <property type="evidence" value="ECO:0007669"/>
    <property type="project" value="UniProtKB-SubCell"/>
</dbReference>
<dbReference type="GO" id="GO:0045259">
    <property type="term" value="C:proton-transporting ATP synthase complex"/>
    <property type="evidence" value="ECO:0007669"/>
    <property type="project" value="UniProtKB-KW"/>
</dbReference>
<dbReference type="GO" id="GO:0043531">
    <property type="term" value="F:ADP binding"/>
    <property type="evidence" value="ECO:0007669"/>
    <property type="project" value="TreeGrafter"/>
</dbReference>
<dbReference type="GO" id="GO:0005524">
    <property type="term" value="F:ATP binding"/>
    <property type="evidence" value="ECO:0007669"/>
    <property type="project" value="UniProtKB-UniRule"/>
</dbReference>
<dbReference type="GO" id="GO:0046933">
    <property type="term" value="F:proton-transporting ATP synthase activity, rotational mechanism"/>
    <property type="evidence" value="ECO:0007669"/>
    <property type="project" value="UniProtKB-UniRule"/>
</dbReference>
<dbReference type="CDD" id="cd18113">
    <property type="entry name" value="ATP-synt_F1_alpha_C"/>
    <property type="match status" value="1"/>
</dbReference>
<dbReference type="CDD" id="cd18116">
    <property type="entry name" value="ATP-synt_F1_alpha_N"/>
    <property type="match status" value="1"/>
</dbReference>
<dbReference type="CDD" id="cd01132">
    <property type="entry name" value="F1-ATPase_alpha_CD"/>
    <property type="match status" value="1"/>
</dbReference>
<dbReference type="FunFam" id="1.20.150.20:FF:000001">
    <property type="entry name" value="ATP synthase subunit alpha"/>
    <property type="match status" value="1"/>
</dbReference>
<dbReference type="FunFam" id="2.40.30.20:FF:000001">
    <property type="entry name" value="ATP synthase subunit alpha"/>
    <property type="match status" value="1"/>
</dbReference>
<dbReference type="FunFam" id="3.40.50.300:FF:002432">
    <property type="entry name" value="ATP synthase subunit alpha, mitochondrial"/>
    <property type="match status" value="1"/>
</dbReference>
<dbReference type="Gene3D" id="2.40.30.20">
    <property type="match status" value="1"/>
</dbReference>
<dbReference type="Gene3D" id="1.20.150.20">
    <property type="entry name" value="ATP synthase alpha/beta chain, C-terminal domain"/>
    <property type="match status" value="1"/>
</dbReference>
<dbReference type="Gene3D" id="3.40.50.300">
    <property type="entry name" value="P-loop containing nucleotide triphosphate hydrolases"/>
    <property type="match status" value="1"/>
</dbReference>
<dbReference type="HAMAP" id="MF_01346">
    <property type="entry name" value="ATP_synth_alpha_bact"/>
    <property type="match status" value="1"/>
</dbReference>
<dbReference type="InterPro" id="IPR023366">
    <property type="entry name" value="ATP_synth_asu-like_sf"/>
</dbReference>
<dbReference type="InterPro" id="IPR000793">
    <property type="entry name" value="ATP_synth_asu_C"/>
</dbReference>
<dbReference type="InterPro" id="IPR038376">
    <property type="entry name" value="ATP_synth_asu_C_sf"/>
</dbReference>
<dbReference type="InterPro" id="IPR033732">
    <property type="entry name" value="ATP_synth_F1_a_nt-bd_dom"/>
</dbReference>
<dbReference type="InterPro" id="IPR005294">
    <property type="entry name" value="ATP_synth_F1_asu"/>
</dbReference>
<dbReference type="InterPro" id="IPR020003">
    <property type="entry name" value="ATPase_a/bsu_AS"/>
</dbReference>
<dbReference type="InterPro" id="IPR004100">
    <property type="entry name" value="ATPase_F1/V1/A1_a/bsu_N"/>
</dbReference>
<dbReference type="InterPro" id="IPR036121">
    <property type="entry name" value="ATPase_F1/V1/A1_a/bsu_N_sf"/>
</dbReference>
<dbReference type="InterPro" id="IPR000194">
    <property type="entry name" value="ATPase_F1/V1/A1_a/bsu_nucl-bd"/>
</dbReference>
<dbReference type="InterPro" id="IPR027417">
    <property type="entry name" value="P-loop_NTPase"/>
</dbReference>
<dbReference type="NCBIfam" id="TIGR00962">
    <property type="entry name" value="atpA"/>
    <property type="match status" value="1"/>
</dbReference>
<dbReference type="NCBIfam" id="NF009884">
    <property type="entry name" value="PRK13343.1"/>
    <property type="match status" value="1"/>
</dbReference>
<dbReference type="PANTHER" id="PTHR48082">
    <property type="entry name" value="ATP SYNTHASE SUBUNIT ALPHA, MITOCHONDRIAL"/>
    <property type="match status" value="1"/>
</dbReference>
<dbReference type="PANTHER" id="PTHR48082:SF2">
    <property type="entry name" value="ATP SYNTHASE SUBUNIT ALPHA, MITOCHONDRIAL"/>
    <property type="match status" value="1"/>
</dbReference>
<dbReference type="Pfam" id="PF00006">
    <property type="entry name" value="ATP-synt_ab"/>
    <property type="match status" value="1"/>
</dbReference>
<dbReference type="Pfam" id="PF00306">
    <property type="entry name" value="ATP-synt_ab_C"/>
    <property type="match status" value="1"/>
</dbReference>
<dbReference type="Pfam" id="PF02874">
    <property type="entry name" value="ATP-synt_ab_N"/>
    <property type="match status" value="1"/>
</dbReference>
<dbReference type="PIRSF" id="PIRSF039088">
    <property type="entry name" value="F_ATPase_subunit_alpha"/>
    <property type="match status" value="1"/>
</dbReference>
<dbReference type="SUPFAM" id="SSF47917">
    <property type="entry name" value="C-terminal domain of alpha and beta subunits of F1 ATP synthase"/>
    <property type="match status" value="1"/>
</dbReference>
<dbReference type="SUPFAM" id="SSF50615">
    <property type="entry name" value="N-terminal domain of alpha and beta subunits of F1 ATP synthase"/>
    <property type="match status" value="1"/>
</dbReference>
<dbReference type="SUPFAM" id="SSF52540">
    <property type="entry name" value="P-loop containing nucleoside triphosphate hydrolases"/>
    <property type="match status" value="1"/>
</dbReference>
<dbReference type="PROSITE" id="PS00152">
    <property type="entry name" value="ATPASE_ALPHA_BETA"/>
    <property type="match status" value="1"/>
</dbReference>
<organism>
    <name type="scientific">Phenylobacterium zucineum (strain HLK1)</name>
    <dbReference type="NCBI Taxonomy" id="450851"/>
    <lineage>
        <taxon>Bacteria</taxon>
        <taxon>Pseudomonadati</taxon>
        <taxon>Pseudomonadota</taxon>
        <taxon>Alphaproteobacteria</taxon>
        <taxon>Caulobacterales</taxon>
        <taxon>Caulobacteraceae</taxon>
        <taxon>Phenylobacterium</taxon>
    </lineage>
</organism>
<reference key="1">
    <citation type="journal article" date="2008" name="BMC Genomics">
        <title>Complete genome of Phenylobacterium zucineum - a novel facultative intracellular bacterium isolated from human erythroleukemia cell line K562.</title>
        <authorList>
            <person name="Luo Y."/>
            <person name="Xu X."/>
            <person name="Ding Z."/>
            <person name="Liu Z."/>
            <person name="Zhang B."/>
            <person name="Yan Z."/>
            <person name="Sun J."/>
            <person name="Hu S."/>
            <person name="Hu X."/>
        </authorList>
    </citation>
    <scope>NUCLEOTIDE SEQUENCE [LARGE SCALE GENOMIC DNA]</scope>
    <source>
        <strain>HLK1</strain>
    </source>
</reference>